<gene>
    <name evidence="1" type="primary">recR</name>
    <name type="ordered locus">PGN_1390</name>
</gene>
<proteinExistence type="inferred from homology"/>
<keyword id="KW-0227">DNA damage</keyword>
<keyword id="KW-0233">DNA recombination</keyword>
<keyword id="KW-0234">DNA repair</keyword>
<keyword id="KW-0479">Metal-binding</keyword>
<keyword id="KW-0862">Zinc</keyword>
<keyword id="KW-0863">Zinc-finger</keyword>
<accession>B2RKL4</accession>
<comment type="function">
    <text evidence="1">May play a role in DNA repair. It seems to be involved in an RecBC-independent recombinational process of DNA repair. It may act with RecF and RecO.</text>
</comment>
<comment type="similarity">
    <text evidence="1">Belongs to the RecR family.</text>
</comment>
<protein>
    <recommendedName>
        <fullName evidence="1">Recombination protein RecR</fullName>
    </recommendedName>
</protein>
<name>RECR_PORG3</name>
<feature type="chain" id="PRO_1000089755" description="Recombination protein RecR">
    <location>
        <begin position="1"/>
        <end position="207"/>
    </location>
</feature>
<feature type="domain" description="Toprim" evidence="1">
    <location>
        <begin position="83"/>
        <end position="178"/>
    </location>
</feature>
<feature type="zinc finger region" description="C4-type" evidence="1">
    <location>
        <begin position="60"/>
        <end position="75"/>
    </location>
</feature>
<reference key="1">
    <citation type="journal article" date="2008" name="DNA Res.">
        <title>Determination of the genome sequence of Porphyromonas gingivalis strain ATCC 33277 and genomic comparison with strain W83 revealed extensive genome rearrangements in P. gingivalis.</title>
        <authorList>
            <person name="Naito M."/>
            <person name="Hirakawa H."/>
            <person name="Yamashita A."/>
            <person name="Ohara N."/>
            <person name="Shoji M."/>
            <person name="Yukitake H."/>
            <person name="Nakayama K."/>
            <person name="Toh H."/>
            <person name="Yoshimura F."/>
            <person name="Kuhara S."/>
            <person name="Hattori M."/>
            <person name="Hayashi T."/>
            <person name="Nakayama K."/>
        </authorList>
    </citation>
    <scope>NUCLEOTIDE SEQUENCE [LARGE SCALE GENOMIC DNA]</scope>
    <source>
        <strain>ATCC 33277 / DSM 20709 / CIP 103683 / JCM 12257 / NCTC 11834 / 2561</strain>
    </source>
</reference>
<evidence type="ECO:0000255" key="1">
    <source>
        <dbReference type="HAMAP-Rule" id="MF_00017"/>
    </source>
</evidence>
<organism>
    <name type="scientific">Porphyromonas gingivalis (strain ATCC 33277 / DSM 20709 / CIP 103683 / JCM 12257 / NCTC 11834 / 2561)</name>
    <dbReference type="NCBI Taxonomy" id="431947"/>
    <lineage>
        <taxon>Bacteria</taxon>
        <taxon>Pseudomonadati</taxon>
        <taxon>Bacteroidota</taxon>
        <taxon>Bacteroidia</taxon>
        <taxon>Bacteroidales</taxon>
        <taxon>Porphyromonadaceae</taxon>
        <taxon>Porphyromonas</taxon>
    </lineage>
</organism>
<sequence>MIQKYPSRLLEKAIDQFATLPGVGRKTALRLALYLLRQPVENTRQFAAALVDLREHISYCRRCHNISDSGVCTICADPTRDQSTLCVVENIRDVMAIENTSQYRGLYHVLGGVISPMDGIGPGDLQIDSLVHRVASEQIHEVILALSTTMEGDTTNFFLFRKLESTGVRVSVIARGIAIGDEIEYADEITLGRSILNRTDFSDSVKF</sequence>
<dbReference type="EMBL" id="AP009380">
    <property type="protein sequence ID" value="BAG33909.1"/>
    <property type="molecule type" value="Genomic_DNA"/>
</dbReference>
<dbReference type="RefSeq" id="WP_012458238.1">
    <property type="nucleotide sequence ID" value="NC_010729.1"/>
</dbReference>
<dbReference type="SMR" id="B2RKL4"/>
<dbReference type="GeneID" id="29256576"/>
<dbReference type="KEGG" id="pgn:PGN_1390"/>
<dbReference type="eggNOG" id="COG0353">
    <property type="taxonomic scope" value="Bacteria"/>
</dbReference>
<dbReference type="HOGENOM" id="CLU_060739_1_1_10"/>
<dbReference type="OrthoDB" id="9802672at2"/>
<dbReference type="BioCyc" id="PGIN431947:G1G2V-1573-MONOMER"/>
<dbReference type="Proteomes" id="UP000008842">
    <property type="component" value="Chromosome"/>
</dbReference>
<dbReference type="GO" id="GO:0003677">
    <property type="term" value="F:DNA binding"/>
    <property type="evidence" value="ECO:0007669"/>
    <property type="project" value="UniProtKB-UniRule"/>
</dbReference>
<dbReference type="GO" id="GO:0008270">
    <property type="term" value="F:zinc ion binding"/>
    <property type="evidence" value="ECO:0007669"/>
    <property type="project" value="UniProtKB-KW"/>
</dbReference>
<dbReference type="GO" id="GO:0006310">
    <property type="term" value="P:DNA recombination"/>
    <property type="evidence" value="ECO:0007669"/>
    <property type="project" value="UniProtKB-UniRule"/>
</dbReference>
<dbReference type="GO" id="GO:0006281">
    <property type="term" value="P:DNA repair"/>
    <property type="evidence" value="ECO:0007669"/>
    <property type="project" value="UniProtKB-UniRule"/>
</dbReference>
<dbReference type="CDD" id="cd01025">
    <property type="entry name" value="TOPRIM_recR"/>
    <property type="match status" value="1"/>
</dbReference>
<dbReference type="Gene3D" id="3.30.60.80">
    <property type="match status" value="1"/>
</dbReference>
<dbReference type="Gene3D" id="3.40.1360.10">
    <property type="match status" value="1"/>
</dbReference>
<dbReference type="Gene3D" id="6.10.250.240">
    <property type="match status" value="1"/>
</dbReference>
<dbReference type="Gene3D" id="1.10.8.420">
    <property type="entry name" value="RecR Domain 1"/>
    <property type="match status" value="1"/>
</dbReference>
<dbReference type="HAMAP" id="MF_00017">
    <property type="entry name" value="RecR"/>
    <property type="match status" value="1"/>
</dbReference>
<dbReference type="InterPro" id="IPR000093">
    <property type="entry name" value="DNA_Rcmb_RecR"/>
</dbReference>
<dbReference type="InterPro" id="IPR023627">
    <property type="entry name" value="Rcmb_RecR"/>
</dbReference>
<dbReference type="InterPro" id="IPR015967">
    <property type="entry name" value="Rcmb_RecR_Znf"/>
</dbReference>
<dbReference type="InterPro" id="IPR006171">
    <property type="entry name" value="TOPRIM_dom"/>
</dbReference>
<dbReference type="InterPro" id="IPR034137">
    <property type="entry name" value="TOPRIM_RecR"/>
</dbReference>
<dbReference type="NCBIfam" id="TIGR00615">
    <property type="entry name" value="recR"/>
    <property type="match status" value="1"/>
</dbReference>
<dbReference type="PANTHER" id="PTHR30446">
    <property type="entry name" value="RECOMBINATION PROTEIN RECR"/>
    <property type="match status" value="1"/>
</dbReference>
<dbReference type="PANTHER" id="PTHR30446:SF0">
    <property type="entry name" value="RECOMBINATION PROTEIN RECR"/>
    <property type="match status" value="1"/>
</dbReference>
<dbReference type="Pfam" id="PF21175">
    <property type="entry name" value="RecR_C"/>
    <property type="match status" value="1"/>
</dbReference>
<dbReference type="Pfam" id="PF21176">
    <property type="entry name" value="RecR_HhH"/>
    <property type="match status" value="1"/>
</dbReference>
<dbReference type="Pfam" id="PF02132">
    <property type="entry name" value="RecR_ZnF"/>
    <property type="match status" value="1"/>
</dbReference>
<dbReference type="Pfam" id="PF13662">
    <property type="entry name" value="Toprim_4"/>
    <property type="match status" value="1"/>
</dbReference>
<dbReference type="SMART" id="SM00493">
    <property type="entry name" value="TOPRIM"/>
    <property type="match status" value="1"/>
</dbReference>
<dbReference type="SUPFAM" id="SSF111304">
    <property type="entry name" value="Recombination protein RecR"/>
    <property type="match status" value="1"/>
</dbReference>
<dbReference type="PROSITE" id="PS01300">
    <property type="entry name" value="RECR"/>
    <property type="match status" value="1"/>
</dbReference>
<dbReference type="PROSITE" id="PS50880">
    <property type="entry name" value="TOPRIM"/>
    <property type="match status" value="1"/>
</dbReference>